<gene>
    <name evidence="1" type="primary">fmt</name>
    <name type="ordered locus">BAbS19_II09220</name>
</gene>
<protein>
    <recommendedName>
        <fullName evidence="1">Methionyl-tRNA formyltransferase</fullName>
        <ecNumber evidence="1">2.1.2.9</ecNumber>
    </recommendedName>
</protein>
<keyword id="KW-0648">Protein biosynthesis</keyword>
<keyword id="KW-0808">Transferase</keyword>
<comment type="function">
    <text evidence="1">Attaches a formyl group to the free amino group of methionyl-tRNA(fMet). The formyl group appears to play a dual role in the initiator identity of N-formylmethionyl-tRNA by promoting its recognition by IF2 and preventing the misappropriation of this tRNA by the elongation apparatus.</text>
</comment>
<comment type="catalytic activity">
    <reaction evidence="1">
        <text>L-methionyl-tRNA(fMet) + (6R)-10-formyltetrahydrofolate = N-formyl-L-methionyl-tRNA(fMet) + (6S)-5,6,7,8-tetrahydrofolate + H(+)</text>
        <dbReference type="Rhea" id="RHEA:24380"/>
        <dbReference type="Rhea" id="RHEA-COMP:9952"/>
        <dbReference type="Rhea" id="RHEA-COMP:9953"/>
        <dbReference type="ChEBI" id="CHEBI:15378"/>
        <dbReference type="ChEBI" id="CHEBI:57453"/>
        <dbReference type="ChEBI" id="CHEBI:78530"/>
        <dbReference type="ChEBI" id="CHEBI:78844"/>
        <dbReference type="ChEBI" id="CHEBI:195366"/>
        <dbReference type="EC" id="2.1.2.9"/>
    </reaction>
</comment>
<comment type="similarity">
    <text evidence="1">Belongs to the Fmt family.</text>
</comment>
<dbReference type="EC" id="2.1.2.9" evidence="1"/>
<dbReference type="EMBL" id="CP000888">
    <property type="protein sequence ID" value="ACD74407.1"/>
    <property type="molecule type" value="Genomic_DNA"/>
</dbReference>
<dbReference type="RefSeq" id="WP_002967377.1">
    <property type="nucleotide sequence ID" value="NC_010740.1"/>
</dbReference>
<dbReference type="SMR" id="B2SC20"/>
<dbReference type="GeneID" id="93015183"/>
<dbReference type="KEGG" id="bmc:BAbS19_II09220"/>
<dbReference type="HOGENOM" id="CLU_033347_1_2_5"/>
<dbReference type="Proteomes" id="UP000002565">
    <property type="component" value="Chromosome 2"/>
</dbReference>
<dbReference type="GO" id="GO:0005829">
    <property type="term" value="C:cytosol"/>
    <property type="evidence" value="ECO:0007669"/>
    <property type="project" value="TreeGrafter"/>
</dbReference>
<dbReference type="GO" id="GO:0004479">
    <property type="term" value="F:methionyl-tRNA formyltransferase activity"/>
    <property type="evidence" value="ECO:0007669"/>
    <property type="project" value="UniProtKB-UniRule"/>
</dbReference>
<dbReference type="CDD" id="cd08646">
    <property type="entry name" value="FMT_core_Met-tRNA-FMT_N"/>
    <property type="match status" value="1"/>
</dbReference>
<dbReference type="CDD" id="cd08704">
    <property type="entry name" value="Met_tRNA_FMT_C"/>
    <property type="match status" value="1"/>
</dbReference>
<dbReference type="Gene3D" id="3.10.25.10">
    <property type="entry name" value="Formyl transferase, C-terminal domain"/>
    <property type="match status" value="1"/>
</dbReference>
<dbReference type="Gene3D" id="3.40.50.170">
    <property type="entry name" value="Formyl transferase, N-terminal domain"/>
    <property type="match status" value="1"/>
</dbReference>
<dbReference type="HAMAP" id="MF_00182">
    <property type="entry name" value="Formyl_trans"/>
    <property type="match status" value="1"/>
</dbReference>
<dbReference type="InterPro" id="IPR005794">
    <property type="entry name" value="Fmt"/>
</dbReference>
<dbReference type="InterPro" id="IPR005793">
    <property type="entry name" value="Formyl_trans_C"/>
</dbReference>
<dbReference type="InterPro" id="IPR037022">
    <property type="entry name" value="Formyl_trans_C_sf"/>
</dbReference>
<dbReference type="InterPro" id="IPR002376">
    <property type="entry name" value="Formyl_transf_N"/>
</dbReference>
<dbReference type="InterPro" id="IPR036477">
    <property type="entry name" value="Formyl_transf_N_sf"/>
</dbReference>
<dbReference type="InterPro" id="IPR011034">
    <property type="entry name" value="Formyl_transferase-like_C_sf"/>
</dbReference>
<dbReference type="InterPro" id="IPR001555">
    <property type="entry name" value="GART_AS"/>
</dbReference>
<dbReference type="InterPro" id="IPR044135">
    <property type="entry name" value="Met-tRNA-FMT_C"/>
</dbReference>
<dbReference type="InterPro" id="IPR041711">
    <property type="entry name" value="Met-tRNA-FMT_N"/>
</dbReference>
<dbReference type="NCBIfam" id="TIGR00460">
    <property type="entry name" value="fmt"/>
    <property type="match status" value="1"/>
</dbReference>
<dbReference type="PANTHER" id="PTHR11138">
    <property type="entry name" value="METHIONYL-TRNA FORMYLTRANSFERASE"/>
    <property type="match status" value="1"/>
</dbReference>
<dbReference type="PANTHER" id="PTHR11138:SF5">
    <property type="entry name" value="METHIONYL-TRNA FORMYLTRANSFERASE, MITOCHONDRIAL"/>
    <property type="match status" value="1"/>
</dbReference>
<dbReference type="Pfam" id="PF02911">
    <property type="entry name" value="Formyl_trans_C"/>
    <property type="match status" value="1"/>
</dbReference>
<dbReference type="Pfam" id="PF00551">
    <property type="entry name" value="Formyl_trans_N"/>
    <property type="match status" value="1"/>
</dbReference>
<dbReference type="SUPFAM" id="SSF50486">
    <property type="entry name" value="FMT C-terminal domain-like"/>
    <property type="match status" value="1"/>
</dbReference>
<dbReference type="SUPFAM" id="SSF53328">
    <property type="entry name" value="Formyltransferase"/>
    <property type="match status" value="1"/>
</dbReference>
<dbReference type="PROSITE" id="PS00373">
    <property type="entry name" value="GART"/>
    <property type="match status" value="1"/>
</dbReference>
<proteinExistence type="inferred from homology"/>
<reference key="1">
    <citation type="journal article" date="2008" name="PLoS ONE">
        <title>Genome sequence of Brucella abortus vaccine strain S19 compared to virulent strains yields candidate virulence genes.</title>
        <authorList>
            <person name="Crasta O.R."/>
            <person name="Folkerts O."/>
            <person name="Fei Z."/>
            <person name="Mane S.P."/>
            <person name="Evans C."/>
            <person name="Martino-Catt S."/>
            <person name="Bricker B."/>
            <person name="Yu G."/>
            <person name="Du L."/>
            <person name="Sobral B.W."/>
        </authorList>
    </citation>
    <scope>NUCLEOTIDE SEQUENCE [LARGE SCALE GENOMIC DNA]</scope>
    <source>
        <strain>S19</strain>
    </source>
</reference>
<organism>
    <name type="scientific">Brucella abortus (strain S19)</name>
    <dbReference type="NCBI Taxonomy" id="430066"/>
    <lineage>
        <taxon>Bacteria</taxon>
        <taxon>Pseudomonadati</taxon>
        <taxon>Pseudomonadota</taxon>
        <taxon>Alphaproteobacteria</taxon>
        <taxon>Hyphomicrobiales</taxon>
        <taxon>Brucellaceae</taxon>
        <taxon>Brucella/Ochrobactrum group</taxon>
        <taxon>Brucella</taxon>
    </lineage>
</organism>
<name>FMT_BRUA1</name>
<feature type="chain" id="PRO_1000098382" description="Methionyl-tRNA formyltransferase">
    <location>
        <begin position="1"/>
        <end position="306"/>
    </location>
</feature>
<feature type="binding site" evidence="1">
    <location>
        <begin position="110"/>
        <end position="113"/>
    </location>
    <ligand>
        <name>(6S)-5,6,7,8-tetrahydrofolate</name>
        <dbReference type="ChEBI" id="CHEBI:57453"/>
    </ligand>
</feature>
<sequence>MRVVFMGTPEFSVPILTAIIGHGYEVVAAYTQPPRPAGRRGLELTRSPVHEKAEQFGIPVFTPTSLKGAEEQDVFASLEADVAIVVAYGLLLPKAILDAPRLGCYNGHASLLPRWRGAAPIQRAIMAGDAETGMMIMKMDEGLDTGPVAMAEKVAITPDMTAGELHDRLSMIGADLMIRALGALERESLALQPQAEEGVTYAAKIDKAEARIDWSKPAKDVHNSIRGLSPFPGAWCEMEINGAVERVKLQRSTLGEGSGAPGTVLDDRLTIACGEGAVRLATLQRSGGKPLPAQEFLRGQRVTKVL</sequence>
<evidence type="ECO:0000255" key="1">
    <source>
        <dbReference type="HAMAP-Rule" id="MF_00182"/>
    </source>
</evidence>
<accession>B2SC20</accession>